<comment type="function">
    <text evidence="7 8">Glycogen synthase participates in the glycogen biosynthetic process along with glycogenin and glycogen branching enzyme. Extends the primer composed of a few glucose units formed by glycogenin by adding new glucose units to it. In this context, glycogen synthase transfers the glycosyl residue from UDP-Glc to the non-reducing end of alpha-1,4-glucan.</text>
</comment>
<comment type="catalytic activity">
    <reaction evidence="7 8">
        <text>[(1-&gt;4)-alpha-D-glucosyl](n) + UDP-alpha-D-glucose = [(1-&gt;4)-alpha-D-glucosyl](n+1) + UDP + H(+)</text>
        <dbReference type="Rhea" id="RHEA:18549"/>
        <dbReference type="Rhea" id="RHEA-COMP:9584"/>
        <dbReference type="Rhea" id="RHEA-COMP:9587"/>
        <dbReference type="ChEBI" id="CHEBI:15378"/>
        <dbReference type="ChEBI" id="CHEBI:15444"/>
        <dbReference type="ChEBI" id="CHEBI:58223"/>
        <dbReference type="ChEBI" id="CHEBI:58885"/>
        <dbReference type="EC" id="2.4.1.11"/>
    </reaction>
    <physiologicalReaction direction="left-to-right" evidence="7 8">
        <dbReference type="Rhea" id="RHEA:18550"/>
    </physiologicalReaction>
</comment>
<comment type="activity regulation">
    <text evidence="7">Allosteric activation by glucose-6-phosphate. Phosphorylation reduces the activity towards UDP-glucose. When in the non-phosphorylated state, glycogen synthase does not require glucose-6-phosphate as an allosteric activator; when phosphorylated it does.</text>
</comment>
<comment type="pathway">
    <text evidence="7 8">Glycan biosynthesis; glycogen biosynthesis.</text>
</comment>
<comment type="subunit">
    <text evidence="3">Part of the GYS1-GYG1 complex, a heterooctamer composed of a tetramer of GYS1 and 2 dimers of GYG1, where each GYS1 protomer binds to one GYG1 subunit (via GYG1 C-terminus); the GYS1 tetramer may dissociate from GYG1 dimers to continue glycogen polymerization on its own.</text>
</comment>
<comment type="PTM">
    <text evidence="10 13">Phosphorylation at Ser-8 is required for modification of Ser-11 by casein kinase I.</text>
</comment>
<comment type="PTM">
    <text evidence="1 7 9 10 13">Phosphorylated at Ser-641 by PASK, leading to inactivation; phosphorylation by PASK is inhibited by glycogen. Dephosphorylation at Ser-641 and Ser-645 by PP1 activates the enzyme (By similarity). Phosphorylation at Ser-8 by AMPK inactivates the enzyme activity (By similarity). Phosphorylated at Ser-641 by DYRK2, leading to inactivation. Primed phosphorylation at Ser-657 (site 5) by CSNK2A1 and CSNK2A2 is required for inhibitory phosphorylation at Ser-641 (site 3a), Ser-645 (site 3b), Ser-649 (site 3c) and Ser-653 (site 4) by GSK3A and GSK3B.</text>
</comment>
<comment type="similarity">
    <text evidence="14">Belongs to the glycosyltransferase 3 family.</text>
</comment>
<protein>
    <recommendedName>
        <fullName evidence="3">Glycogen [starch] synthase, muscle</fullName>
        <ecNumber evidence="7 8">2.4.1.11</ecNumber>
    </recommendedName>
    <alternativeName>
        <fullName evidence="3">Glycogen synthase 1</fullName>
    </alternativeName>
</protein>
<reference key="1">
    <citation type="journal article" date="1989" name="FASEB J.">
        <title>Primary structure of rabbit skeletal muscle glycogen synthase deduced from cDNA clones.</title>
        <authorList>
            <person name="Zhang W.M."/>
            <person name="Browner M.F."/>
            <person name="Fletterick R.J."/>
            <person name="DePaoli-Roach A.A."/>
            <person name="Roach P.J."/>
        </authorList>
    </citation>
    <scope>NUCLEOTIDE SEQUENCE [MRNA]</scope>
    <source>
        <strain>New Zealand white</strain>
        <tissue>Skeletal muscle</tissue>
    </source>
</reference>
<reference key="2">
    <citation type="journal article" date="1986" name="Biochem. Biophys. Res. Commun.">
        <title>Identification of the C-terminus of rabbit skeletal muscle glycogen synthase.</title>
        <authorList>
            <person name="Cohen P."/>
            <person name="Holmes C.F.B."/>
        </authorList>
    </citation>
    <scope>PROTEIN SEQUENCE OF 2-30 AND 612-735</scope>
</reference>
<reference key="3">
    <citation type="journal article" date="1980" name="Eur. J. Biochem.">
        <title>Glycogen synthase from rabbit skeletal muscle. Amino acid sequence at the sites phosphorylated by glycogen synthase kinase-3, and extension of the N-terminal sequence containing the site phosphorylated by phosphorylase kinase.</title>
        <authorList>
            <person name="Rylatt D.B."/>
            <person name="Aitken A."/>
            <person name="Bilham T."/>
            <person name="Condon G.D."/>
            <person name="Embi N."/>
            <person name="Cohen P."/>
        </authorList>
    </citation>
    <scope>PROTEIN SEQUENCE OF 2-30</scope>
    <scope>PHOSPHORYLATION AT SER-8; SER-641; SER-645 AND SER-649</scope>
</reference>
<reference key="4">
    <citation type="journal article" date="1979" name="FEBS Lett.">
        <title>Effect of proteases on the structure and activity of rabbit skeletal muscle glycogen synthetase.</title>
        <authorList>
            <person name="Huang T.S."/>
            <person name="Krebs E.G."/>
        </authorList>
    </citation>
    <scope>PROTEIN SEQUENCE OF 2-16</scope>
</reference>
<reference key="5">
    <citation type="journal article" date="1988" name="Eur. J. Biochem.">
        <title>Analysis of the in vivo phosphorylation state of rabbit skeletal muscle glycogen synthase by fast-atom-bombardment mass spectrometry.</title>
        <authorList>
            <person name="Poulter L."/>
            <person name="Ang S.G."/>
            <person name="Gibson B.W."/>
            <person name="Williams D.H."/>
            <person name="Holmes C.F."/>
            <person name="Caudwell F.B."/>
            <person name="Pitcher J."/>
            <person name="Cohen P."/>
        </authorList>
    </citation>
    <scope>PROTEIN SEQUENCE OF 2-15; 639-662 AND 694-735</scope>
    <scope>PHOSPHORYLATION AT SER-8; SER-11; SER-641; SER-645; SER-649; SER-653; SER-657 AND SER-698</scope>
</reference>
<reference key="6">
    <citation type="journal article" date="1988" name="J. Biol. Chem.">
        <title>Catalytic site of rabbit glycogen synthase isozymes. Identification of an active site lysine close to the amino terminus of the subunit.</title>
        <authorList>
            <person name="Mahrenholz A.M."/>
            <person name="Wang Y.H."/>
            <person name="Roach P.J."/>
        </authorList>
    </citation>
    <scope>PROTEIN SEQUENCE OF 6-21; 31-44 AND 286-300</scope>
</reference>
<reference key="7">
    <citation type="journal article" date="1990" name="J. Biol. Chem.">
        <title>Phosphate groups as substrate determinants for casein kinase I action.</title>
        <authorList>
            <person name="Flotow H."/>
            <person name="Graves P.R."/>
            <person name="Wang A.Q."/>
            <person name="Fiol C.J."/>
            <person name="Roeske R.W."/>
            <person name="Roach P.J."/>
        </authorList>
    </citation>
    <scope>PROTEIN SEQUENCE OF 665-683</scope>
</reference>
<reference key="8">
    <citation type="journal article" date="1985" name="Eur. J. Biochem.">
        <title>Multisite phosphorylation of glycogen synthase from rabbit skeletal muscle. Identification of the sites phosphorylated by casein kinase-I.</title>
        <authorList>
            <person name="Kuret J."/>
            <person name="Woodgett J.R."/>
            <person name="Cohen P."/>
        </authorList>
    </citation>
    <scope>PARTIAL PROTEIN SEQUENCE</scope>
</reference>
<reference key="9">
    <citation type="journal article" date="1988" name="Biochem. Biophys. Res. Commun.">
        <title>Phosphorylation of glycogen synthase by a bovine thymus protein-tyrosine kinase, p40.</title>
        <authorList>
            <person name="Mahrenholz A.M."/>
            <person name="Votaw P."/>
            <person name="Roach P.J."/>
            <person name="Depaoli-Roach A.A."/>
            <person name="Zioncheck T.F."/>
            <person name="Harrison M.L."/>
            <person name="Geahlen R.L."/>
        </authorList>
    </citation>
    <scope>PROTEIN SEQUENCE OF 665-683</scope>
</reference>
<reference key="10">
    <citation type="journal article" date="1987" name="J. Biol. Chem.">
        <title>Formation of protein kinase recognition sites by covalent modification of the substrate. Molecular mechanism for the synergistic action of casein kinase II and glycogen synthase kinase 3.</title>
        <authorList>
            <person name="Fiol C.J."/>
            <person name="Mahrenholz A.M."/>
            <person name="Wang Y."/>
            <person name="Roeske R.W."/>
            <person name="Roach P.J."/>
        </authorList>
    </citation>
    <scope>PHOSPHORYLATION AT SER-641; SER-645; SER-649; SER-653 AND SER-657</scope>
</reference>
<reference key="11">
    <citation type="journal article" date="2004" name="J. Biol. Chem.">
        <title>Phosphorylation of Ser640 in muscle glycogen synthase by DYRK family protein kinases.</title>
        <authorList>
            <person name="Skurat A.V."/>
            <person name="Dietrich A.D."/>
        </authorList>
    </citation>
    <scope>FUNCTION</scope>
    <scope>CATALYTIC ACTIVITY</scope>
    <scope>PATHWAY</scope>
    <scope>PHOSPHORYLATION AT SER-641</scope>
    <scope>ACTIVITY REGULATION</scope>
    <scope>MUTAGENESIS OF SER-641</scope>
</reference>
<reference key="12">
    <citation type="journal article" date="2005" name="Proc. Natl. Acad. Sci. U.S.A.">
        <title>Control of mammalian glycogen synthase by PAS kinase.</title>
        <authorList>
            <person name="Wilson W.A."/>
            <person name="Skurat A.V."/>
            <person name="Probst B."/>
            <person name="de Paoli-Roach A."/>
            <person name="Roach P.J."/>
            <person name="Rutter J."/>
        </authorList>
    </citation>
    <scope>FUNCTION</scope>
    <scope>CATALYTIC ACTIVITY</scope>
    <scope>ACTIVITY REGULATION</scope>
    <scope>PATHWAY</scope>
    <scope>PHOSPHORYLATION AT SER-641</scope>
    <scope>MUTAGENESIS OF SER-641 AND SER-645</scope>
</reference>
<evidence type="ECO:0000250" key="1"/>
<evidence type="ECO:0000250" key="2">
    <source>
        <dbReference type="UniProtKB" id="A2RRU1"/>
    </source>
</evidence>
<evidence type="ECO:0000250" key="3">
    <source>
        <dbReference type="UniProtKB" id="P13807"/>
    </source>
</evidence>
<evidence type="ECO:0000250" key="4">
    <source>
        <dbReference type="UniProtKB" id="Q9Z1E4"/>
    </source>
</evidence>
<evidence type="ECO:0000256" key="5">
    <source>
        <dbReference type="SAM" id="MobiDB-lite"/>
    </source>
</evidence>
<evidence type="ECO:0000269" key="6">
    <source>
    </source>
</evidence>
<evidence type="ECO:0000269" key="7">
    <source>
    </source>
</evidence>
<evidence type="ECO:0000269" key="8">
    <source>
    </source>
</evidence>
<evidence type="ECO:0000269" key="9">
    <source>
    </source>
</evidence>
<evidence type="ECO:0000269" key="10">
    <source>
    </source>
</evidence>
<evidence type="ECO:0000269" key="11">
    <source>
    </source>
</evidence>
<evidence type="ECO:0000269" key="12">
    <source>
    </source>
</evidence>
<evidence type="ECO:0000269" key="13">
    <source>
    </source>
</evidence>
<evidence type="ECO:0000305" key="14"/>
<gene>
    <name evidence="3" type="primary">GYS1</name>
    <name type="synonym">GYS</name>
</gene>
<keyword id="KW-0021">Allosteric enzyme</keyword>
<keyword id="KW-0903">Direct protein sequencing</keyword>
<keyword id="KW-0320">Glycogen biosynthesis</keyword>
<keyword id="KW-0328">Glycosyltransferase</keyword>
<keyword id="KW-0597">Phosphoprotein</keyword>
<keyword id="KW-1185">Reference proteome</keyword>
<keyword id="KW-0808">Transferase</keyword>
<feature type="initiator methionine" description="Removed" evidence="6 10 11 13">
    <location>
        <position position="1"/>
    </location>
</feature>
<feature type="chain" id="PRO_0000194767" description="Glycogen [starch] synthase, muscle">
    <location>
        <begin position="2"/>
        <end position="735"/>
    </location>
</feature>
<feature type="region of interest" description="Disordered" evidence="5">
    <location>
        <begin position="629"/>
        <end position="735"/>
    </location>
</feature>
<feature type="compositionally biased region" description="Acidic residues" evidence="5">
    <location>
        <begin position="658"/>
        <end position="681"/>
    </location>
</feature>
<feature type="compositionally biased region" description="Basic and acidic residues" evidence="5">
    <location>
        <begin position="682"/>
        <end position="695"/>
    </location>
</feature>
<feature type="compositionally biased region" description="Low complexity" evidence="5">
    <location>
        <begin position="698"/>
        <end position="735"/>
    </location>
</feature>
<feature type="binding site" evidence="3">
    <location>
        <position position="39"/>
    </location>
    <ligand>
        <name>UDP</name>
        <dbReference type="ChEBI" id="CHEBI:58223"/>
    </ligand>
</feature>
<feature type="binding site" evidence="3">
    <location>
        <position position="205"/>
    </location>
    <ligand>
        <name>UDP-alpha-D-glucose</name>
        <dbReference type="ChEBI" id="CHEBI:58885"/>
    </ligand>
</feature>
<feature type="binding site" evidence="3">
    <location>
        <position position="211"/>
    </location>
    <ligand>
        <name>UDP-alpha-D-glucose</name>
        <dbReference type="ChEBI" id="CHEBI:58885"/>
    </ligand>
</feature>
<feature type="binding site" description="in other chain" evidence="3">
    <location>
        <position position="291"/>
    </location>
    <ligand>
        <name>alpha-D-glucose 6-phosphate</name>
        <dbReference type="ChEBI" id="CHEBI:58225"/>
        <note>allosteric activator; ligand shared between two neighboring subunits</note>
    </ligand>
</feature>
<feature type="binding site" description="in other chain" evidence="3">
    <location>
        <position position="292"/>
    </location>
    <ligand>
        <name>alpha-D-glucose 6-phosphate</name>
        <dbReference type="ChEBI" id="CHEBI:58225"/>
        <note>allosteric activator; ligand shared between two neighboring subunits</note>
    </ligand>
</feature>
<feature type="binding site" evidence="3">
    <location>
        <position position="294"/>
    </location>
    <ligand>
        <name>alpha-D-glucose 6-phosphate</name>
        <dbReference type="ChEBI" id="CHEBI:58225"/>
        <note>allosteric activator; ligand shared between two neighboring subunits</note>
    </ligand>
</feature>
<feature type="binding site" evidence="3">
    <location>
        <position position="297"/>
    </location>
    <ligand>
        <name>alpha-D-glucose 6-phosphate</name>
        <dbReference type="ChEBI" id="CHEBI:58225"/>
        <note>allosteric activator; ligand shared between two neighboring subunits</note>
    </ligand>
</feature>
<feature type="binding site" evidence="3">
    <location>
        <position position="301"/>
    </location>
    <ligand>
        <name>alpha-D-glucose 6-phosphate</name>
        <dbReference type="ChEBI" id="CHEBI:58225"/>
        <note>allosteric activator; ligand shared between two neighboring subunits</note>
    </ligand>
</feature>
<feature type="binding site" evidence="3">
    <location>
        <position position="331"/>
    </location>
    <ligand>
        <name>UDP</name>
        <dbReference type="ChEBI" id="CHEBI:58223"/>
    </ligand>
</feature>
<feature type="binding site" evidence="3">
    <location>
        <position position="331"/>
    </location>
    <ligand>
        <name>UDP-alpha-D-glucose</name>
        <dbReference type="ChEBI" id="CHEBI:58885"/>
    </ligand>
</feature>
<feature type="binding site" evidence="3">
    <location>
        <position position="501"/>
    </location>
    <ligand>
        <name>alpha-D-glucose 6-phosphate</name>
        <dbReference type="ChEBI" id="CHEBI:58225"/>
        <note>allosteric activator; ligand shared between two neighboring subunits</note>
    </ligand>
</feature>
<feature type="binding site" evidence="3">
    <location>
        <position position="510"/>
    </location>
    <ligand>
        <name>UDP-alpha-D-glucose</name>
        <dbReference type="ChEBI" id="CHEBI:58885"/>
    </ligand>
</feature>
<feature type="binding site" evidence="3">
    <location>
        <position position="512"/>
    </location>
    <ligand>
        <name>UDP-alpha-D-glucose</name>
        <dbReference type="ChEBI" id="CHEBI:58885"/>
    </ligand>
</feature>
<feature type="binding site" evidence="3">
    <location>
        <position position="513"/>
    </location>
    <ligand>
        <name>UDP-alpha-D-glucose</name>
        <dbReference type="ChEBI" id="CHEBI:58885"/>
    </ligand>
</feature>
<feature type="binding site" evidence="3">
    <location>
        <position position="515"/>
    </location>
    <ligand>
        <name>UDP</name>
        <dbReference type="ChEBI" id="CHEBI:58223"/>
    </ligand>
</feature>
<feature type="binding site" evidence="3">
    <location>
        <position position="582"/>
    </location>
    <ligand>
        <name>alpha-D-glucose 6-phosphate</name>
        <dbReference type="ChEBI" id="CHEBI:58225"/>
        <note>allosteric activator; ligand shared between two neighboring subunits</note>
    </ligand>
</feature>
<feature type="binding site" evidence="3">
    <location>
        <position position="586"/>
    </location>
    <ligand>
        <name>alpha-D-glucose 6-phosphate</name>
        <dbReference type="ChEBI" id="CHEBI:58225"/>
        <note>allosteric activator; ligand shared between two neighboring subunits</note>
    </ligand>
</feature>
<feature type="modified residue" description="Phosphoserine; by AMPK and PKA" evidence="10 13">
    <location>
        <position position="8"/>
    </location>
</feature>
<feature type="modified residue" description="Phosphoserine" evidence="10 12">
    <location>
        <position position="11"/>
    </location>
</feature>
<feature type="modified residue" description="Phosphoserine" evidence="3">
    <location>
        <position position="412"/>
    </location>
</feature>
<feature type="modified residue" description="Phosphoserine; by DYRK2, GSK3-alpha, GSK3-beta and PASK" evidence="7 8 9 10 13">
    <location>
        <position position="641"/>
    </location>
</feature>
<feature type="modified residue" description="Phosphoserine; by GSK3-alpha and GSK3-beta" evidence="9 10 13">
    <location>
        <position position="645"/>
    </location>
</feature>
<feature type="modified residue" description="Phosphoserine; by GSK3-alpha and GSK3-beta" evidence="9 10 13">
    <location>
        <position position="649"/>
    </location>
</feature>
<feature type="modified residue" description="Phosphoserine" evidence="2">
    <location>
        <position position="652"/>
    </location>
</feature>
<feature type="modified residue" description="Phosphoserine; by GSK3-alpha and GSK3-beta" evidence="9 10">
    <location>
        <position position="653"/>
    </location>
</feature>
<feature type="modified residue" description="Phosphoserine; by CK2" evidence="9 10">
    <location>
        <position position="657"/>
    </location>
</feature>
<feature type="modified residue" description="Phosphoserine" evidence="10 12">
    <location>
        <position position="698"/>
    </location>
</feature>
<feature type="modified residue" description="Phosphothreonine" evidence="3">
    <location>
        <position position="700"/>
    </location>
</feature>
<feature type="modified residue" description="Phosphoserine" evidence="4">
    <location>
        <position position="709"/>
    </location>
</feature>
<feature type="modified residue" description="Phosphoserine" evidence="3">
    <location>
        <position position="711"/>
    </location>
</feature>
<feature type="modified residue" description="Phosphothreonine" evidence="4">
    <location>
        <position position="719"/>
    </location>
</feature>
<feature type="modified residue" description="Phosphoserine" evidence="3">
    <location>
        <position position="725"/>
    </location>
</feature>
<feature type="modified residue" description="Phosphoserine" evidence="3">
    <location>
        <position position="729"/>
    </location>
</feature>
<feature type="mutagenesis site" description="Loss of an inhibitory phosphorylation site. Abolishes phosphorylation by DYRK2. Abolishes PASK-mediated phosphorylation." evidence="7 8">
    <original>S</original>
    <variation>A</variation>
    <location>
        <position position="641"/>
    </location>
</feature>
<feature type="mutagenesis site" description="Does not affect PASK-mediated phosphorylation." evidence="8">
    <original>S</original>
    <variation>A</variation>
    <location>
        <position position="645"/>
    </location>
</feature>
<feature type="sequence conflict" description="In Ref. 2; AA sequence." evidence="14" ref="2">
    <original>E</original>
    <variation>Q</variation>
    <location>
        <position position="692"/>
    </location>
</feature>
<feature type="sequence conflict" description="In Ref. 2; AA sequence and 5; AA sequence." evidence="14" ref="2 5">
    <original>P</original>
    <variation>S</variation>
    <location>
        <position position="726"/>
    </location>
</feature>
<feature type="sequence conflict" description="In Ref. 2; AA sequence and 5; AA sequence." evidence="14" ref="2 5">
    <original>S</original>
    <variation>P</variation>
    <location>
        <position position="728"/>
    </location>
</feature>
<organism>
    <name type="scientific">Oryctolagus cuniculus</name>
    <name type="common">Rabbit</name>
    <dbReference type="NCBI Taxonomy" id="9986"/>
    <lineage>
        <taxon>Eukaryota</taxon>
        <taxon>Metazoa</taxon>
        <taxon>Chordata</taxon>
        <taxon>Craniata</taxon>
        <taxon>Vertebrata</taxon>
        <taxon>Euteleostomi</taxon>
        <taxon>Mammalia</taxon>
        <taxon>Eutheria</taxon>
        <taxon>Euarchontoglires</taxon>
        <taxon>Glires</taxon>
        <taxon>Lagomorpha</taxon>
        <taxon>Leporidae</taxon>
        <taxon>Oryctolagus</taxon>
    </lineage>
</organism>
<sequence>MPLSRTLSVSSLPGLEDWEDEFDLENSVLFEVAWEVANKVGGIYTVLQTKAKVTGDEWGDNYFLVGPYTEQGVRTQVELLEPPTPALKRTLDSMNSKGCKVYFGRWLIEGGPLVVLLDVGASAWALERWKGELWDTCNIGVPWYDREANDAVLFGFLTTWFLGEFLAQNEEKPHVVAHFHEWLAGIGLCLCRARRLPVATIFTTHATLLGRYLCAGAVDFYNNLENFNVDKEAGERQIYHRYCMERAAAHCAHVFTTVSQITAIEAQHLLKRKPDIVTPNGLNVKKFSAMHEFQNLHAQSKARIQEFVRGHFYGHLDFNLDKTLYFFIAGRYEFSNKGADVFLEALARLNYLLRVNGSEQTVVAFFIMPARTNNFNVETLKGQAVRKQLWDTANTVKEKFGRKLYESLLVGSLPDMNKMLDKEDFTMMKRAIFATQRQSFPPVCTHNMLDDSSDPILTTIRRIGLFNSSADRVKVIFHPEFLSSTSPLLPVDYEEFVRGCHLGVFPSYYEPWGYTPAECTVMGIPSISTNLSGFGCFMEEHIADPSAYGIYILDRRFRSLDDSCSQLTSFLYSFCQQSRRQRIIQRNRTERLSDLLDWKYLGRYYMSARHMALAKAFPDHFTYEPHEADATQGYRYPRPASVPPSPSLSRHSSPHQSEDEEEPRDGLPEEDGERYDEDEEAAKDRRNIRAPEWPRRASCTSSSGGSKRSNSVDTSSLSTPSEPLSPASSLGEERN</sequence>
<accession>P13834</accession>
<accession>O18817</accession>
<dbReference type="EC" id="2.4.1.11" evidence="7 8"/>
<dbReference type="EMBL" id="AF017114">
    <property type="protein sequence ID" value="AAB69872.1"/>
    <property type="molecule type" value="mRNA"/>
</dbReference>
<dbReference type="PIR" id="A33369">
    <property type="entry name" value="A33369"/>
</dbReference>
<dbReference type="RefSeq" id="NP_001075492.1">
    <property type="nucleotide sequence ID" value="NM_001082023.1"/>
</dbReference>
<dbReference type="RefSeq" id="XP_017195288.1">
    <property type="nucleotide sequence ID" value="XM_017339799.1"/>
</dbReference>
<dbReference type="SMR" id="P13834"/>
<dbReference type="BioGRID" id="1171683">
    <property type="interactions" value="4"/>
</dbReference>
<dbReference type="CORUM" id="P13834"/>
<dbReference type="FunCoup" id="P13834">
    <property type="interactions" value="522"/>
</dbReference>
<dbReference type="IntAct" id="P13834">
    <property type="interactions" value="4"/>
</dbReference>
<dbReference type="MINT" id="P13834"/>
<dbReference type="STRING" id="9986.ENSOCUP00000000015"/>
<dbReference type="CAZy" id="GT3">
    <property type="family name" value="Glycosyltransferase Family 3"/>
</dbReference>
<dbReference type="iPTMnet" id="P13834"/>
<dbReference type="PaxDb" id="9986-ENSOCUP00000000015"/>
<dbReference type="GeneID" id="100008660"/>
<dbReference type="KEGG" id="ocu:100008660"/>
<dbReference type="CTD" id="2997"/>
<dbReference type="eggNOG" id="KOG3742">
    <property type="taxonomic scope" value="Eukaryota"/>
</dbReference>
<dbReference type="InParanoid" id="P13834"/>
<dbReference type="OrthoDB" id="6335297at2759"/>
<dbReference type="UniPathway" id="UPA00164"/>
<dbReference type="Proteomes" id="UP000001811">
    <property type="component" value="Unplaced"/>
</dbReference>
<dbReference type="GO" id="GO:0098723">
    <property type="term" value="C:skeletal muscle myofibril"/>
    <property type="evidence" value="ECO:0000314"/>
    <property type="project" value="CAFA"/>
</dbReference>
<dbReference type="GO" id="GO:0004373">
    <property type="term" value="F:alpha-1,4-glucan glucosyltransferase (UDP-glucose donor) activity"/>
    <property type="evidence" value="ECO:0000314"/>
    <property type="project" value="UniProtKB"/>
</dbReference>
<dbReference type="GO" id="GO:0019901">
    <property type="term" value="F:protein kinase binding"/>
    <property type="evidence" value="ECO:0000353"/>
    <property type="project" value="UniProtKB"/>
</dbReference>
<dbReference type="GO" id="GO:0005978">
    <property type="term" value="P:glycogen biosynthetic process"/>
    <property type="evidence" value="ECO:0000314"/>
    <property type="project" value="UniProtKB"/>
</dbReference>
<dbReference type="CDD" id="cd03793">
    <property type="entry name" value="GT3_GSY2-like"/>
    <property type="match status" value="1"/>
</dbReference>
<dbReference type="FunFam" id="3.40.50.2000:FF:000014">
    <property type="entry name" value="Glycogen [starch] synthase"/>
    <property type="match status" value="1"/>
</dbReference>
<dbReference type="FunFam" id="3.40.50.2000:FF:000028">
    <property type="entry name" value="Glycogen [starch] synthase"/>
    <property type="match status" value="1"/>
</dbReference>
<dbReference type="Gene3D" id="3.40.50.2000">
    <property type="entry name" value="Glycogen Phosphorylase B"/>
    <property type="match status" value="2"/>
</dbReference>
<dbReference type="InterPro" id="IPR008631">
    <property type="entry name" value="Glycogen_synth"/>
</dbReference>
<dbReference type="PANTHER" id="PTHR10176:SF2">
    <property type="entry name" value="GLYCOGEN [STARCH] SYNTHASE, MUSCLE"/>
    <property type="match status" value="1"/>
</dbReference>
<dbReference type="PANTHER" id="PTHR10176">
    <property type="entry name" value="GLYCOGEN SYNTHASE"/>
    <property type="match status" value="1"/>
</dbReference>
<dbReference type="Pfam" id="PF05693">
    <property type="entry name" value="Glycogen_syn"/>
    <property type="match status" value="1"/>
</dbReference>
<dbReference type="SUPFAM" id="SSF53756">
    <property type="entry name" value="UDP-Glycosyltransferase/glycogen phosphorylase"/>
    <property type="match status" value="2"/>
</dbReference>
<name>GYS1_RABIT</name>
<proteinExistence type="evidence at protein level"/>